<comment type="function">
    <text evidence="6">Transcriptional repressor during pronephros development. Plays a role in regionalization of the pronephros; may promote formation of the distal tubule and duct over formation of the glomus and proximal tubule.</text>
</comment>
<comment type="subunit">
    <text evidence="1 6">Homooligomer (By similarity). Interacts with ctbp.</text>
</comment>
<comment type="subcellular location">
    <subcellularLocation>
        <location evidence="1">Nucleus</location>
    </subcellularLocation>
    <subcellularLocation>
        <location evidence="1">Nucleus speckle</location>
    </subcellularLocation>
</comment>
<comment type="tissue specificity">
    <text evidence="5 6">Expressed dynamically during embryonic development; in the developing pronephros, specific areas of the brain (forebrain, midbrain and hindbrain), and in the majority of the visceral arch, and head mesenchyme derived from neural crest cells. Within the pronephros, expressed in the ventroposterior region of the pronephros anlagen from stage 20 (and is absent from the splanchnic layer that forms the glomus), then expression becomes restricted to the distal tubule and duct by the tadpole stage. In adults, expressed in various tissues including kidney, lung, testis, spleen and stomach.</text>
</comment>
<comment type="developmental stage">
    <text evidence="5 6">Expressed in embryos and adults. May be expressed in oocytes.</text>
</comment>
<comment type="induction">
    <text evidence="6 7">By retinoic acid (RA) signaling. Repressed by wt1 and by notch signaling.</text>
</comment>
<comment type="domain">
    <text evidence="6">The CTBP-binding motifs and the N-terminal group of zinc fingers are required for repressor activity in the pronephros.</text>
</comment>
<comment type="caution">
    <text evidence="9">Although PubMed:15905132 report high expression throughout oocyte development and throughout embryogenesis, PubMed:16574097 detect no maternal expression, with zygotic expression beginning at stage 20 (end of neurulation).</text>
</comment>
<sequence>MKSEDYSYARMAPDIHEERQYRCEECDQLFESKTELSDHQKYPCVTPHSAFSLVENSFPPSLNDDSDLTEMQHTHECKECDQVFPDMQSLEKHLLSHTEEREYKCDQCPKAFNWKSNLIRHQMSHDTGKHYECENCSKQVFTDPSNLQRHIRSQHVGARAHACSDCGKTFATSSGLKQHKHIHSSVKPFVCEVCHKSYTQFSNLCRHKRMHADCRTQIKCKDCGQMFSTTSSLNKHRRFCEGKNHFAAGGLFGQGISLPGTPAMDKASMISMNHANAGLADYFGASRHTAGLTFPTAPGFPFSFPGLFPSSLYHRPPFIPPASPVKGLPGVEQSSKSQSPHVNQPQVLPATQDILKALSKHPSVDENKALEFITESNLNQRPHEKISDHSESSDLDDVSTPSGSDLETTSGSDLESDIESDKDKLKENGKLYKDKMSPLQSLAALNSKREYNNHSVFSPCLEEQTAVTGAVNDSIKAIASIAEKYFGSTGLVGLPDKKGTTLPYPSMFPLPFFPAFSQSMYTFPDRDVRPVPLKIEPESPKETKKVQKGKTESPFDLTTKRKEEKASPNVPSKSGAPTSSNHDQPLDLSMGSRSRAATTKQTEPRKNHIFNEKKDMDPELPKTSEHCLQHARPAPFFMDPIYRVEKRKPMDPLEILKEKYLRPSPGFLFHPQFPMPDQRTWMSAIENMAEKLESFNALKPEANNLIQSVPSMFNFRASSSALPENLLRKGKERYTCRYCGKIFPRSANLTRHLRTHTGEQPYRCKYCDRSFSISSNLQRHVRNIHNKEKPFKCHLCDRCFGQQTNLDRHLKKHENGNLSGTAASSPHSEIEGTGPILDEKEDSYFNEIRNFIGNSSHNKQSPLNSDERINGSHDKIMLAGQNSDILDDDEDEAILDEDDEESDIAVKVMKEPNTSVMLEKCSVDEYEEGGKSEVNSKVSPSRYDDEDDDDDEEEDFKKSLSALDHIRHFTDSLKMRKMDDGQFNDAELSAFTASHLTDDLKHPLYRKSKSQAYAMMLSLSDQESLHPTTHTSSSMWHNLARAAAESTALHSVSHV</sequence>
<reference evidence="9 11" key="1">
    <citation type="journal article" date="2005" name="Gene Expr. Patterns">
        <title>Evi-1 expression in Xenopus.</title>
        <authorList>
            <person name="Mead P.E."/>
            <person name="Parganas E."/>
            <person name="Ohtsuka S."/>
            <person name="Morishita K."/>
            <person name="Gamer L."/>
            <person name="Kuliyev E."/>
            <person name="Wright C.V."/>
            <person name="Ihle J.N."/>
        </authorList>
    </citation>
    <scope>NUCLEOTIDE SEQUENCE [MRNA]</scope>
    <scope>TISSUE SPECIFICITY</scope>
    <scope>DEVELOPMENTAL STAGE</scope>
    <source>
        <tissue evidence="5">Oocyte</tissue>
    </source>
</reference>
<reference evidence="9 12" key="2">
    <citation type="journal article" date="2006" name="Dev. Biol.">
        <title>Evi1 is specifically expressed in the distal tubule and duct of the Xenopus pronephros and plays a role in its formation.</title>
        <authorList>
            <person name="Van Campenhout C."/>
            <person name="Nichane M."/>
            <person name="Antoniou A."/>
            <person name="Pendeville H."/>
            <person name="Bronchain O.J."/>
            <person name="Marine J.C."/>
            <person name="Mazabraud A."/>
            <person name="Voz M.L."/>
            <person name="Bellefroid E.J."/>
        </authorList>
    </citation>
    <scope>NUCLEOTIDE SEQUENCE [MRNA]</scope>
    <scope>FUNCTION</scope>
    <scope>INTERACTION WITH CTBP</scope>
    <scope>TISSUE SPECIFICITY</scope>
    <scope>DEVELOPMENTAL STAGE</scope>
    <scope>INDUCTION</scope>
    <scope>DOMAIN</scope>
    <source>
        <tissue evidence="6">Tadpole head</tissue>
    </source>
</reference>
<reference evidence="10" key="3">
    <citation type="submission" date="2008-11" db="EMBL/GenBank/DDBJ databases">
        <authorList>
            <consortium name="NIH - Xenopus Gene Collection (XGC) project"/>
        </authorList>
    </citation>
    <scope>NUCLEOTIDE SEQUENCE [LARGE SCALE MRNA]</scope>
</reference>
<reference evidence="9" key="4">
    <citation type="journal article" date="2006" name="Development">
        <title>The Notch-effector HRT1 gene plays a role in glomerular development and patterning of the Xenopus pronephros anlagen.</title>
        <authorList>
            <person name="Taelman V."/>
            <person name="Van Campenhout C."/>
            <person name="Soelter M."/>
            <person name="Pieler T."/>
            <person name="Bellefroid E.J."/>
        </authorList>
    </citation>
    <scope>INDUCTION</scope>
</reference>
<feature type="chain" id="PRO_0000392430" description="MDS1 and EVI1 complex locus protein EVI1-A">
    <location>
        <begin position="1"/>
        <end position="1055"/>
    </location>
</feature>
<feature type="zinc finger region" description="C2H2-type 1" evidence="3">
    <location>
        <begin position="21"/>
        <end position="48"/>
    </location>
</feature>
<feature type="zinc finger region" description="C2H2-type 2" evidence="3">
    <location>
        <begin position="75"/>
        <end position="97"/>
    </location>
</feature>
<feature type="zinc finger region" description="C2H2-type 3" evidence="3">
    <location>
        <begin position="103"/>
        <end position="125"/>
    </location>
</feature>
<feature type="zinc finger region" description="C2H2-type 4; degenerate" evidence="3">
    <location>
        <begin position="131"/>
        <end position="155"/>
    </location>
</feature>
<feature type="zinc finger region" description="C2H2-type 5" evidence="3">
    <location>
        <begin position="161"/>
        <end position="183"/>
    </location>
</feature>
<feature type="zinc finger region" description="C2H2-type 6" evidence="3">
    <location>
        <begin position="189"/>
        <end position="211"/>
    </location>
</feature>
<feature type="zinc finger region" description="C2H2-type 7; atypical" evidence="3">
    <location>
        <begin position="218"/>
        <end position="240"/>
    </location>
</feature>
<feature type="zinc finger region" description="C2H2-type 8" evidence="3">
    <location>
        <begin position="734"/>
        <end position="756"/>
    </location>
</feature>
<feature type="zinc finger region" description="C2H2-type 9" evidence="3">
    <location>
        <begin position="762"/>
        <end position="785"/>
    </location>
</feature>
<feature type="zinc finger region" description="C2H2-type 10" evidence="3">
    <location>
        <begin position="791"/>
        <end position="813"/>
    </location>
</feature>
<feature type="region of interest" description="Disordered" evidence="4">
    <location>
        <begin position="324"/>
        <end position="345"/>
    </location>
</feature>
<feature type="region of interest" description="Disordered" evidence="4">
    <location>
        <begin position="372"/>
        <end position="423"/>
    </location>
</feature>
<feature type="region of interest" description="Disordered" evidence="4">
    <location>
        <begin position="531"/>
        <end position="621"/>
    </location>
</feature>
<feature type="region of interest" description="Disordered" evidence="4">
    <location>
        <begin position="813"/>
        <end position="837"/>
    </location>
</feature>
<feature type="region of interest" description="Disordered" evidence="4">
    <location>
        <begin position="922"/>
        <end position="957"/>
    </location>
</feature>
<feature type="short sequence motif" description="Nuclear localization signal" evidence="2">
    <location>
        <begin position="422"/>
        <end position="435"/>
    </location>
</feature>
<feature type="short sequence motif" description="CTBP-binding motif 1" evidence="1">
    <location>
        <begin position="554"/>
        <end position="558"/>
    </location>
</feature>
<feature type="short sequence motif" description="CTBP-binding motif 2" evidence="1">
    <location>
        <begin position="585"/>
        <end position="589"/>
    </location>
</feature>
<feature type="compositionally biased region" description="Polar residues" evidence="4">
    <location>
        <begin position="332"/>
        <end position="345"/>
    </location>
</feature>
<feature type="compositionally biased region" description="Basic and acidic residues" evidence="4">
    <location>
        <begin position="381"/>
        <end position="392"/>
    </location>
</feature>
<feature type="compositionally biased region" description="Polar residues" evidence="4">
    <location>
        <begin position="399"/>
        <end position="413"/>
    </location>
</feature>
<feature type="compositionally biased region" description="Basic and acidic residues" evidence="4">
    <location>
        <begin position="531"/>
        <end position="566"/>
    </location>
</feature>
<feature type="compositionally biased region" description="Polar residues" evidence="4">
    <location>
        <begin position="569"/>
        <end position="583"/>
    </location>
</feature>
<feature type="compositionally biased region" description="Polar residues" evidence="4">
    <location>
        <begin position="591"/>
        <end position="601"/>
    </location>
</feature>
<feature type="compositionally biased region" description="Basic and acidic residues" evidence="4">
    <location>
        <begin position="602"/>
        <end position="621"/>
    </location>
</feature>
<feature type="compositionally biased region" description="Polar residues" evidence="4">
    <location>
        <begin position="816"/>
        <end position="827"/>
    </location>
</feature>
<feature type="compositionally biased region" description="Acidic residues" evidence="4">
    <location>
        <begin position="944"/>
        <end position="954"/>
    </location>
</feature>
<feature type="sequence conflict" description="In Ref. 2; AAY96416." evidence="9" ref="2">
    <original>A</original>
    <variation>T</variation>
    <location>
        <position position="248"/>
    </location>
</feature>
<feature type="sequence conflict" description="In Ref. 2; AAY96416." evidence="9" ref="2">
    <location>
        <position position="376"/>
    </location>
</feature>
<feature type="sequence conflict" description="In Ref. 2; AAY96416." evidence="9" ref="2">
    <original>A</original>
    <variation>T</variation>
    <location>
        <position position="443"/>
    </location>
</feature>
<feature type="sequence conflict" description="In Ref. 1; AAY22202." evidence="9" ref="1">
    <original>W</original>
    <variation>L</variation>
    <location>
        <position position="681"/>
    </location>
</feature>
<feature type="sequence conflict" description="In Ref. 2; AAY96416." evidence="9" ref="2">
    <original>L</original>
    <variation>F</variation>
    <location>
        <position position="705"/>
    </location>
</feature>
<feature type="sequence conflict" description="In Ref. 2; AAY96416." evidence="9" ref="2">
    <original>S</original>
    <variation>L</variation>
    <location>
        <position position="711"/>
    </location>
</feature>
<feature type="sequence conflict" description="In Ref. 2; AAY96416." evidence="9" ref="2">
    <original>C</original>
    <variation>W</variation>
    <location>
        <position position="739"/>
    </location>
</feature>
<protein>
    <recommendedName>
        <fullName>MDS1 and EVI1 complex locus protein EVI1-A</fullName>
    </recommendedName>
    <alternativeName>
        <fullName>Ecotropic virus integration site 1 protein homolog-A</fullName>
        <shortName evidence="11">Evi-1</shortName>
        <shortName evidence="8">xEvi-1</shortName>
    </alternativeName>
</protein>
<dbReference type="EMBL" id="AY939893">
    <property type="protein sequence ID" value="AAY22202.1"/>
    <property type="molecule type" value="mRNA"/>
</dbReference>
<dbReference type="EMBL" id="DQ088677">
    <property type="protein sequence ID" value="AAY96416.1"/>
    <property type="molecule type" value="mRNA"/>
</dbReference>
<dbReference type="EMBL" id="BC170296">
    <property type="protein sequence ID" value="AAI70296.1"/>
    <property type="molecule type" value="mRNA"/>
</dbReference>
<dbReference type="RefSeq" id="NP_001089102.1">
    <property type="nucleotide sequence ID" value="NM_001095633.1"/>
</dbReference>
<dbReference type="RefSeq" id="NP_001089139.1">
    <property type="nucleotide sequence ID" value="NM_001095670.1"/>
</dbReference>
<dbReference type="SMR" id="B7ZRU9"/>
<dbReference type="GeneID" id="734157"/>
<dbReference type="KEGG" id="xla:734157"/>
<dbReference type="CTD" id="734157"/>
<dbReference type="OrthoDB" id="10004641at2759"/>
<dbReference type="Proteomes" id="UP000186698">
    <property type="component" value="Chromosome 5L"/>
</dbReference>
<dbReference type="Bgee" id="734157">
    <property type="expression patterns" value="Expressed in kidney and 12 other cell types or tissues"/>
</dbReference>
<dbReference type="GO" id="GO:0016607">
    <property type="term" value="C:nuclear speck"/>
    <property type="evidence" value="ECO:0007669"/>
    <property type="project" value="UniProtKB-SubCell"/>
</dbReference>
<dbReference type="GO" id="GO:0005634">
    <property type="term" value="C:nucleus"/>
    <property type="evidence" value="ECO:0000318"/>
    <property type="project" value="GO_Central"/>
</dbReference>
<dbReference type="GO" id="GO:0001228">
    <property type="term" value="F:DNA-binding transcription activator activity, RNA polymerase II-specific"/>
    <property type="evidence" value="ECO:0000318"/>
    <property type="project" value="GO_Central"/>
</dbReference>
<dbReference type="GO" id="GO:0000978">
    <property type="term" value="F:RNA polymerase II cis-regulatory region sequence-specific DNA binding"/>
    <property type="evidence" value="ECO:0000318"/>
    <property type="project" value="GO_Central"/>
</dbReference>
<dbReference type="GO" id="GO:0008270">
    <property type="term" value="F:zinc ion binding"/>
    <property type="evidence" value="ECO:0007669"/>
    <property type="project" value="UniProtKB-KW"/>
</dbReference>
<dbReference type="GO" id="GO:0045892">
    <property type="term" value="P:negative regulation of DNA-templated transcription"/>
    <property type="evidence" value="ECO:0000315"/>
    <property type="project" value="UniProtKB"/>
</dbReference>
<dbReference type="GO" id="GO:0000122">
    <property type="term" value="P:negative regulation of transcription by RNA polymerase II"/>
    <property type="evidence" value="ECO:0000315"/>
    <property type="project" value="UniProtKB"/>
</dbReference>
<dbReference type="GO" id="GO:0039013">
    <property type="term" value="P:pronephric distal tubule morphogenesis"/>
    <property type="evidence" value="ECO:0000315"/>
    <property type="project" value="UniProtKB"/>
</dbReference>
<dbReference type="GO" id="GO:0039022">
    <property type="term" value="P:pronephric duct development"/>
    <property type="evidence" value="ECO:0000315"/>
    <property type="project" value="UniProtKB"/>
</dbReference>
<dbReference type="GO" id="GO:0048793">
    <property type="term" value="P:pronephros development"/>
    <property type="evidence" value="ECO:0000270"/>
    <property type="project" value="UniProtKB"/>
</dbReference>
<dbReference type="GO" id="GO:0072196">
    <property type="term" value="P:proximal/distal pattern formation involved in pronephric nephron development"/>
    <property type="evidence" value="ECO:0000315"/>
    <property type="project" value="UniProtKB"/>
</dbReference>
<dbReference type="GO" id="GO:0006357">
    <property type="term" value="P:regulation of transcription by RNA polymerase II"/>
    <property type="evidence" value="ECO:0000318"/>
    <property type="project" value="GO_Central"/>
</dbReference>
<dbReference type="FunFam" id="3.30.160.60:FF:000112">
    <property type="entry name" value="Mds1 and evi1 complex locus protein"/>
    <property type="match status" value="1"/>
</dbReference>
<dbReference type="FunFam" id="3.30.160.60:FF:000126">
    <property type="entry name" value="Mds1 and evi1 complex locus protein"/>
    <property type="match status" value="1"/>
</dbReference>
<dbReference type="FunFam" id="3.30.160.60:FF:000150">
    <property type="entry name" value="Mds1 and evi1 complex locus protein"/>
    <property type="match status" value="1"/>
</dbReference>
<dbReference type="FunFam" id="3.30.160.60:FF:000159">
    <property type="entry name" value="Mds1 and evi1 complex locus protein"/>
    <property type="match status" value="1"/>
</dbReference>
<dbReference type="FunFam" id="3.30.160.60:FF:000192">
    <property type="entry name" value="Mds1 and evi1 complex locus protein"/>
    <property type="match status" value="1"/>
</dbReference>
<dbReference type="FunFam" id="3.30.160.60:FF:000929">
    <property type="entry name" value="Uncharacterized protein, isoform B"/>
    <property type="match status" value="1"/>
</dbReference>
<dbReference type="Gene3D" id="3.30.160.60">
    <property type="entry name" value="Classic Zinc Finger"/>
    <property type="match status" value="8"/>
</dbReference>
<dbReference type="InterPro" id="IPR050331">
    <property type="entry name" value="Zinc_finger"/>
</dbReference>
<dbReference type="InterPro" id="IPR036236">
    <property type="entry name" value="Znf_C2H2_sf"/>
</dbReference>
<dbReference type="InterPro" id="IPR013087">
    <property type="entry name" value="Znf_C2H2_type"/>
</dbReference>
<dbReference type="PANTHER" id="PTHR16515">
    <property type="entry name" value="PR DOMAIN ZINC FINGER PROTEIN"/>
    <property type="match status" value="1"/>
</dbReference>
<dbReference type="PANTHER" id="PTHR16515:SF57">
    <property type="entry name" value="ZINC FINGER PROTEIN 154-LIKE"/>
    <property type="match status" value="1"/>
</dbReference>
<dbReference type="Pfam" id="PF00096">
    <property type="entry name" value="zf-C2H2"/>
    <property type="match status" value="8"/>
</dbReference>
<dbReference type="Pfam" id="PF13912">
    <property type="entry name" value="zf-C2H2_6"/>
    <property type="match status" value="1"/>
</dbReference>
<dbReference type="SMART" id="SM00355">
    <property type="entry name" value="ZnF_C2H2"/>
    <property type="match status" value="10"/>
</dbReference>
<dbReference type="SUPFAM" id="SSF57667">
    <property type="entry name" value="beta-beta-alpha zinc fingers"/>
    <property type="match status" value="5"/>
</dbReference>
<dbReference type="PROSITE" id="PS00028">
    <property type="entry name" value="ZINC_FINGER_C2H2_1"/>
    <property type="match status" value="7"/>
</dbReference>
<dbReference type="PROSITE" id="PS50157">
    <property type="entry name" value="ZINC_FINGER_C2H2_2"/>
    <property type="match status" value="10"/>
</dbReference>
<keyword id="KW-0217">Developmental protein</keyword>
<keyword id="KW-0238">DNA-binding</keyword>
<keyword id="KW-0479">Metal-binding</keyword>
<keyword id="KW-0539">Nucleus</keyword>
<keyword id="KW-1185">Reference proteome</keyword>
<keyword id="KW-0677">Repeat</keyword>
<keyword id="KW-0678">Repressor</keyword>
<keyword id="KW-0804">Transcription</keyword>
<keyword id="KW-0805">Transcription regulation</keyword>
<keyword id="KW-0862">Zinc</keyword>
<keyword id="KW-0863">Zinc-finger</keyword>
<name>EVI1A_XENLA</name>
<gene>
    <name type="primary">mecom-a</name>
    <name evidence="10" type="synonym">evi1</name>
    <name type="synonym">evi1-a</name>
</gene>
<proteinExistence type="evidence at protein level"/>
<organism>
    <name type="scientific">Xenopus laevis</name>
    <name type="common">African clawed frog</name>
    <dbReference type="NCBI Taxonomy" id="8355"/>
    <lineage>
        <taxon>Eukaryota</taxon>
        <taxon>Metazoa</taxon>
        <taxon>Chordata</taxon>
        <taxon>Craniata</taxon>
        <taxon>Vertebrata</taxon>
        <taxon>Euteleostomi</taxon>
        <taxon>Amphibia</taxon>
        <taxon>Batrachia</taxon>
        <taxon>Anura</taxon>
        <taxon>Pipoidea</taxon>
        <taxon>Pipidae</taxon>
        <taxon>Xenopodinae</taxon>
        <taxon>Xenopus</taxon>
        <taxon>Xenopus</taxon>
    </lineage>
</organism>
<evidence type="ECO:0000250" key="1">
    <source>
        <dbReference type="UniProtKB" id="Q03112"/>
    </source>
</evidence>
<evidence type="ECO:0000255" key="2"/>
<evidence type="ECO:0000255" key="3">
    <source>
        <dbReference type="PROSITE-ProRule" id="PRU00042"/>
    </source>
</evidence>
<evidence type="ECO:0000256" key="4">
    <source>
        <dbReference type="SAM" id="MobiDB-lite"/>
    </source>
</evidence>
<evidence type="ECO:0000269" key="5">
    <source>
    </source>
</evidence>
<evidence type="ECO:0000269" key="6">
    <source>
    </source>
</evidence>
<evidence type="ECO:0000269" key="7">
    <source>
    </source>
</evidence>
<evidence type="ECO:0000303" key="8">
    <source>
    </source>
</evidence>
<evidence type="ECO:0000305" key="9"/>
<evidence type="ECO:0000312" key="10">
    <source>
        <dbReference type="EMBL" id="AAI70296.1"/>
    </source>
</evidence>
<evidence type="ECO:0000312" key="11">
    <source>
        <dbReference type="EMBL" id="AAY22202.1"/>
    </source>
</evidence>
<evidence type="ECO:0000312" key="12">
    <source>
        <dbReference type="EMBL" id="AAY96416.1"/>
    </source>
</evidence>
<accession>B7ZRU9</accession>
<accession>Q4JHF9</accession>
<accession>Q4QSE0</accession>